<name>URK_STAA9</name>
<proteinExistence type="inferred from homology"/>
<accession>A5ITD6</accession>
<gene>
    <name evidence="1" type="primary">udk</name>
    <name type="ordered locus">SaurJH9_1668</name>
</gene>
<comment type="catalytic activity">
    <reaction evidence="1">
        <text>uridine + ATP = UMP + ADP + H(+)</text>
        <dbReference type="Rhea" id="RHEA:16825"/>
        <dbReference type="ChEBI" id="CHEBI:15378"/>
        <dbReference type="ChEBI" id="CHEBI:16704"/>
        <dbReference type="ChEBI" id="CHEBI:30616"/>
        <dbReference type="ChEBI" id="CHEBI:57865"/>
        <dbReference type="ChEBI" id="CHEBI:456216"/>
        <dbReference type="EC" id="2.7.1.48"/>
    </reaction>
</comment>
<comment type="catalytic activity">
    <reaction evidence="1">
        <text>cytidine + ATP = CMP + ADP + H(+)</text>
        <dbReference type="Rhea" id="RHEA:24674"/>
        <dbReference type="ChEBI" id="CHEBI:15378"/>
        <dbReference type="ChEBI" id="CHEBI:17562"/>
        <dbReference type="ChEBI" id="CHEBI:30616"/>
        <dbReference type="ChEBI" id="CHEBI:60377"/>
        <dbReference type="ChEBI" id="CHEBI:456216"/>
        <dbReference type="EC" id="2.7.1.48"/>
    </reaction>
</comment>
<comment type="pathway">
    <text evidence="1">Pyrimidine metabolism; CTP biosynthesis via salvage pathway; CTP from cytidine: step 1/3.</text>
</comment>
<comment type="pathway">
    <text evidence="1">Pyrimidine metabolism; UMP biosynthesis via salvage pathway; UMP from uridine: step 1/1.</text>
</comment>
<comment type="subcellular location">
    <subcellularLocation>
        <location evidence="1">Cytoplasm</location>
    </subcellularLocation>
</comment>
<comment type="similarity">
    <text evidence="1">Belongs to the uridine kinase family.</text>
</comment>
<sequence>MKATTIIGIAGGSGSGKTTVTNEIMKNLEGHSVALLAQDYYYKDQKHLTFDERLETNYDHPFAFDNDLLIENLKDLKNGKAVEVPTYDYASHTRSDITIDFKPKDVIIVEGIFALENKVLRDMMDVKIYVDTDADLRILRRLTRDTKERGRSMDSVINQYLSVVRPMHDQFIEPTKKYADIIIPEGGSNKVAIDIMTTKIQSLVSKQ</sequence>
<protein>
    <recommendedName>
        <fullName evidence="1">Uridine kinase</fullName>
        <ecNumber evidence="1">2.7.1.48</ecNumber>
    </recommendedName>
    <alternativeName>
        <fullName evidence="1">Cytidine monophosphokinase</fullName>
    </alternativeName>
    <alternativeName>
        <fullName evidence="1">Uridine monophosphokinase</fullName>
    </alternativeName>
</protein>
<dbReference type="EC" id="2.7.1.48" evidence="1"/>
<dbReference type="EMBL" id="CP000703">
    <property type="protein sequence ID" value="ABQ49459.1"/>
    <property type="molecule type" value="Genomic_DNA"/>
</dbReference>
<dbReference type="RefSeq" id="WP_000648617.1">
    <property type="nucleotide sequence ID" value="NC_009487.1"/>
</dbReference>
<dbReference type="SMR" id="A5ITD6"/>
<dbReference type="KEGG" id="saj:SaurJH9_1668"/>
<dbReference type="HOGENOM" id="CLU_021278_1_2_9"/>
<dbReference type="UniPathway" id="UPA00574">
    <property type="reaction ID" value="UER00637"/>
</dbReference>
<dbReference type="UniPathway" id="UPA00579">
    <property type="reaction ID" value="UER00640"/>
</dbReference>
<dbReference type="GO" id="GO:0005737">
    <property type="term" value="C:cytoplasm"/>
    <property type="evidence" value="ECO:0007669"/>
    <property type="project" value="UniProtKB-SubCell"/>
</dbReference>
<dbReference type="GO" id="GO:0005524">
    <property type="term" value="F:ATP binding"/>
    <property type="evidence" value="ECO:0007669"/>
    <property type="project" value="UniProtKB-UniRule"/>
</dbReference>
<dbReference type="GO" id="GO:0043771">
    <property type="term" value="F:cytidine kinase activity"/>
    <property type="evidence" value="ECO:0007669"/>
    <property type="project" value="RHEA"/>
</dbReference>
<dbReference type="GO" id="GO:0004849">
    <property type="term" value="F:uridine kinase activity"/>
    <property type="evidence" value="ECO:0007669"/>
    <property type="project" value="UniProtKB-UniRule"/>
</dbReference>
<dbReference type="GO" id="GO:0044211">
    <property type="term" value="P:CTP salvage"/>
    <property type="evidence" value="ECO:0007669"/>
    <property type="project" value="UniProtKB-UniRule"/>
</dbReference>
<dbReference type="GO" id="GO:0044206">
    <property type="term" value="P:UMP salvage"/>
    <property type="evidence" value="ECO:0007669"/>
    <property type="project" value="UniProtKB-UniRule"/>
</dbReference>
<dbReference type="CDD" id="cd02023">
    <property type="entry name" value="UMPK"/>
    <property type="match status" value="1"/>
</dbReference>
<dbReference type="Gene3D" id="3.40.50.300">
    <property type="entry name" value="P-loop containing nucleotide triphosphate hydrolases"/>
    <property type="match status" value="1"/>
</dbReference>
<dbReference type="HAMAP" id="MF_00551">
    <property type="entry name" value="Uridine_kinase"/>
    <property type="match status" value="1"/>
</dbReference>
<dbReference type="InterPro" id="IPR027417">
    <property type="entry name" value="P-loop_NTPase"/>
</dbReference>
<dbReference type="InterPro" id="IPR006083">
    <property type="entry name" value="PRK/URK"/>
</dbReference>
<dbReference type="InterPro" id="IPR026008">
    <property type="entry name" value="Uridine_kinase"/>
</dbReference>
<dbReference type="InterPro" id="IPR000764">
    <property type="entry name" value="Uridine_kinase-like"/>
</dbReference>
<dbReference type="NCBIfam" id="NF004018">
    <property type="entry name" value="PRK05480.1"/>
    <property type="match status" value="1"/>
</dbReference>
<dbReference type="NCBIfam" id="TIGR00235">
    <property type="entry name" value="udk"/>
    <property type="match status" value="1"/>
</dbReference>
<dbReference type="PANTHER" id="PTHR10285">
    <property type="entry name" value="URIDINE KINASE"/>
    <property type="match status" value="1"/>
</dbReference>
<dbReference type="Pfam" id="PF00485">
    <property type="entry name" value="PRK"/>
    <property type="match status" value="1"/>
</dbReference>
<dbReference type="PRINTS" id="PR00988">
    <property type="entry name" value="URIDINKINASE"/>
</dbReference>
<dbReference type="SUPFAM" id="SSF52540">
    <property type="entry name" value="P-loop containing nucleoside triphosphate hydrolases"/>
    <property type="match status" value="1"/>
</dbReference>
<reference key="1">
    <citation type="submission" date="2007-05" db="EMBL/GenBank/DDBJ databases">
        <title>Complete sequence of chromosome of Staphylococcus aureus subsp. aureus JH9.</title>
        <authorList>
            <consortium name="US DOE Joint Genome Institute"/>
            <person name="Copeland A."/>
            <person name="Lucas S."/>
            <person name="Lapidus A."/>
            <person name="Barry K."/>
            <person name="Detter J.C."/>
            <person name="Glavina del Rio T."/>
            <person name="Hammon N."/>
            <person name="Israni S."/>
            <person name="Pitluck S."/>
            <person name="Chain P."/>
            <person name="Malfatti S."/>
            <person name="Shin M."/>
            <person name="Vergez L."/>
            <person name="Schmutz J."/>
            <person name="Larimer F."/>
            <person name="Land M."/>
            <person name="Hauser L."/>
            <person name="Kyrpides N."/>
            <person name="Kim E."/>
            <person name="Tomasz A."/>
            <person name="Richardson P."/>
        </authorList>
    </citation>
    <scope>NUCLEOTIDE SEQUENCE [LARGE SCALE GENOMIC DNA]</scope>
    <source>
        <strain>JH9</strain>
    </source>
</reference>
<evidence type="ECO:0000255" key="1">
    <source>
        <dbReference type="HAMAP-Rule" id="MF_00551"/>
    </source>
</evidence>
<keyword id="KW-0067">ATP-binding</keyword>
<keyword id="KW-0963">Cytoplasm</keyword>
<keyword id="KW-0418">Kinase</keyword>
<keyword id="KW-0547">Nucleotide-binding</keyword>
<keyword id="KW-0808">Transferase</keyword>
<feature type="chain" id="PRO_1000081974" description="Uridine kinase">
    <location>
        <begin position="1"/>
        <end position="207"/>
    </location>
</feature>
<feature type="binding site" evidence="1">
    <location>
        <begin position="11"/>
        <end position="18"/>
    </location>
    <ligand>
        <name>ATP</name>
        <dbReference type="ChEBI" id="CHEBI:30616"/>
    </ligand>
</feature>
<organism>
    <name type="scientific">Staphylococcus aureus (strain JH9)</name>
    <dbReference type="NCBI Taxonomy" id="359786"/>
    <lineage>
        <taxon>Bacteria</taxon>
        <taxon>Bacillati</taxon>
        <taxon>Bacillota</taxon>
        <taxon>Bacilli</taxon>
        <taxon>Bacillales</taxon>
        <taxon>Staphylococcaceae</taxon>
        <taxon>Staphylococcus</taxon>
    </lineage>
</organism>